<name>SMG_ECOLU</name>
<reference key="1">
    <citation type="journal article" date="2009" name="PLoS Genet.">
        <title>Organised genome dynamics in the Escherichia coli species results in highly diverse adaptive paths.</title>
        <authorList>
            <person name="Touchon M."/>
            <person name="Hoede C."/>
            <person name="Tenaillon O."/>
            <person name="Barbe V."/>
            <person name="Baeriswyl S."/>
            <person name="Bidet P."/>
            <person name="Bingen E."/>
            <person name="Bonacorsi S."/>
            <person name="Bouchier C."/>
            <person name="Bouvet O."/>
            <person name="Calteau A."/>
            <person name="Chiapello H."/>
            <person name="Clermont O."/>
            <person name="Cruveiller S."/>
            <person name="Danchin A."/>
            <person name="Diard M."/>
            <person name="Dossat C."/>
            <person name="Karoui M.E."/>
            <person name="Frapy E."/>
            <person name="Garry L."/>
            <person name="Ghigo J.M."/>
            <person name="Gilles A.M."/>
            <person name="Johnson J."/>
            <person name="Le Bouguenec C."/>
            <person name="Lescat M."/>
            <person name="Mangenot S."/>
            <person name="Martinez-Jehanne V."/>
            <person name="Matic I."/>
            <person name="Nassif X."/>
            <person name="Oztas S."/>
            <person name="Petit M.A."/>
            <person name="Pichon C."/>
            <person name="Rouy Z."/>
            <person name="Ruf C.S."/>
            <person name="Schneider D."/>
            <person name="Tourret J."/>
            <person name="Vacherie B."/>
            <person name="Vallenet D."/>
            <person name="Medigue C."/>
            <person name="Rocha E.P.C."/>
            <person name="Denamur E."/>
        </authorList>
    </citation>
    <scope>NUCLEOTIDE SEQUENCE [LARGE SCALE GENOMIC DNA]</scope>
    <source>
        <strain>UMN026 / ExPEC</strain>
    </source>
</reference>
<accession>B7NDQ6</accession>
<dbReference type="EMBL" id="CU928163">
    <property type="protein sequence ID" value="CAR14906.1"/>
    <property type="molecule type" value="Genomic_DNA"/>
</dbReference>
<dbReference type="RefSeq" id="WP_000460672.1">
    <property type="nucleotide sequence ID" value="NC_011751.1"/>
</dbReference>
<dbReference type="RefSeq" id="YP_002414411.1">
    <property type="nucleotide sequence ID" value="NC_011751.1"/>
</dbReference>
<dbReference type="SMR" id="B7NDQ6"/>
<dbReference type="STRING" id="585056.ECUMN_3758"/>
<dbReference type="GeneID" id="86948148"/>
<dbReference type="KEGG" id="eum:ECUMN_3758"/>
<dbReference type="PATRIC" id="fig|585056.7.peg.3933"/>
<dbReference type="HOGENOM" id="CLU_133242_0_0_6"/>
<dbReference type="Proteomes" id="UP000007097">
    <property type="component" value="Chromosome"/>
</dbReference>
<dbReference type="HAMAP" id="MF_00598">
    <property type="entry name" value="Smg"/>
    <property type="match status" value="1"/>
</dbReference>
<dbReference type="InterPro" id="IPR007456">
    <property type="entry name" value="Smg"/>
</dbReference>
<dbReference type="NCBIfam" id="NF002897">
    <property type="entry name" value="PRK03430.1"/>
    <property type="match status" value="1"/>
</dbReference>
<dbReference type="PANTHER" id="PTHR38692">
    <property type="entry name" value="PROTEIN SMG"/>
    <property type="match status" value="1"/>
</dbReference>
<dbReference type="PANTHER" id="PTHR38692:SF1">
    <property type="entry name" value="PROTEIN SMG"/>
    <property type="match status" value="1"/>
</dbReference>
<dbReference type="Pfam" id="PF04361">
    <property type="entry name" value="DUF494"/>
    <property type="match status" value="1"/>
</dbReference>
<proteinExistence type="inferred from homology"/>
<comment type="similarity">
    <text evidence="1">Belongs to the Smg family.</text>
</comment>
<evidence type="ECO:0000255" key="1">
    <source>
        <dbReference type="HAMAP-Rule" id="MF_00598"/>
    </source>
</evidence>
<organism>
    <name type="scientific">Escherichia coli O17:K52:H18 (strain UMN026 / ExPEC)</name>
    <dbReference type="NCBI Taxonomy" id="585056"/>
    <lineage>
        <taxon>Bacteria</taxon>
        <taxon>Pseudomonadati</taxon>
        <taxon>Pseudomonadota</taxon>
        <taxon>Gammaproteobacteria</taxon>
        <taxon>Enterobacterales</taxon>
        <taxon>Enterobacteriaceae</taxon>
        <taxon>Escherichia</taxon>
    </lineage>
</organism>
<feature type="chain" id="PRO_1000129889" description="Protein Smg">
    <location>
        <begin position="1"/>
        <end position="157"/>
    </location>
</feature>
<sequence length="157" mass="18483">MFDVLMYLFETYIHTEAELRVDQDKLEQDLTDAGFDREDIYNALLWLEKLADYQEGLAEPMQLASDPLSMRIYTPEECERLDASCRGFLLFLEQIQVLNLETREMVIERVLALDTAEFDLEDLKWVILMVLFNIPGCENAYQQMEELLFEVNEGMLH</sequence>
<gene>
    <name evidence="1" type="primary">smg</name>
    <name type="ordered locus">ECUMN_3758</name>
</gene>
<protein>
    <recommendedName>
        <fullName evidence="1">Protein Smg</fullName>
    </recommendedName>
</protein>